<reference key="1">
    <citation type="journal article" date="2011" name="MBio">
        <title>Novel metabolic attributes of the genus Cyanothece, comprising a group of unicellular nitrogen-fixing Cyanobacteria.</title>
        <authorList>
            <person name="Bandyopadhyay A."/>
            <person name="Elvitigala T."/>
            <person name="Welsh E."/>
            <person name="Stockel J."/>
            <person name="Liberton M."/>
            <person name="Min H."/>
            <person name="Sherman L.A."/>
            <person name="Pakrasi H.B."/>
        </authorList>
    </citation>
    <scope>NUCLEOTIDE SEQUENCE [LARGE SCALE GENOMIC DNA]</scope>
    <source>
        <strain>PCC 8801 / RF-1</strain>
    </source>
</reference>
<name>GLPK_RIPO1</name>
<proteinExistence type="inferred from homology"/>
<organism>
    <name type="scientific">Rippkaea orientalis (strain PCC 8801 / RF-1)</name>
    <name type="common">Cyanothece sp. (strain PCC 8801)</name>
    <dbReference type="NCBI Taxonomy" id="41431"/>
    <lineage>
        <taxon>Bacteria</taxon>
        <taxon>Bacillati</taxon>
        <taxon>Cyanobacteriota</taxon>
        <taxon>Cyanophyceae</taxon>
        <taxon>Oscillatoriophycideae</taxon>
        <taxon>Chroococcales</taxon>
        <taxon>Aphanothecaceae</taxon>
        <taxon>Rippkaea</taxon>
        <taxon>Rippkaea orientalis</taxon>
    </lineage>
</organism>
<comment type="function">
    <text evidence="1">Key enzyme in the regulation of glycerol uptake and metabolism. Catalyzes the phosphorylation of glycerol to yield sn-glycerol 3-phosphate.</text>
</comment>
<comment type="catalytic activity">
    <reaction evidence="1">
        <text>glycerol + ATP = sn-glycerol 3-phosphate + ADP + H(+)</text>
        <dbReference type="Rhea" id="RHEA:21644"/>
        <dbReference type="ChEBI" id="CHEBI:15378"/>
        <dbReference type="ChEBI" id="CHEBI:17754"/>
        <dbReference type="ChEBI" id="CHEBI:30616"/>
        <dbReference type="ChEBI" id="CHEBI:57597"/>
        <dbReference type="ChEBI" id="CHEBI:456216"/>
        <dbReference type="EC" id="2.7.1.30"/>
    </reaction>
</comment>
<comment type="activity regulation">
    <text evidence="1">Inhibited by fructose 1,6-bisphosphate (FBP).</text>
</comment>
<comment type="pathway">
    <text evidence="1">Polyol metabolism; glycerol degradation via glycerol kinase pathway; sn-glycerol 3-phosphate from glycerol: step 1/1.</text>
</comment>
<comment type="similarity">
    <text evidence="1">Belongs to the FGGY kinase family.</text>
</comment>
<keyword id="KW-0067">ATP-binding</keyword>
<keyword id="KW-0319">Glycerol metabolism</keyword>
<keyword id="KW-0418">Kinase</keyword>
<keyword id="KW-0547">Nucleotide-binding</keyword>
<keyword id="KW-1185">Reference proteome</keyword>
<keyword id="KW-0808">Transferase</keyword>
<accession>B7K2C0</accession>
<sequence>MPKNPSQYILALDLGTTGNRAILFNHQGEIAGQSYQELTQYYPHPGWLEHDAIEIWQDTCNIIKKVLKTTNIDITAIAAIGLTVQRETCLLWDKTTGKPLHNAIVWQDRRTSSLCHQLKTEGKSVEITQKTGLIIDPYFSATKLTWLLEWVKANNPSVALKNVLAGTIDAWILWNLTGGQVHATDHSNASRTMLMNLDTRSWDRDLMDLFGIPERIMPEIRPSLSYFGETDPQLFGAKIPITAIFGDQQAALFAHGCNRPGLLKCTYGTGSFLIIQAGTQVMRSHHQLLSTVAWSTENSAYYALEGAIFTSGAAIQWLRDGLKIINNAAETETLSRQVTDTKGVYFVPALSGLGAPHWDMNARGAFFGITGGVGREHLVRAVLEAIAYQVKEVVDAINLESTLKVAALKVDGGASQNDFLMQFQADALGVPIERPLILDATAQGAAFGAGLTVGFWDDYDSLIASRIIDKIFEPGEDREQVQANFIPWQRAVERAKNWVH</sequence>
<gene>
    <name evidence="1" type="primary">glpK</name>
    <name type="ordered locus">PCC8801_1188</name>
</gene>
<dbReference type="EC" id="2.7.1.30" evidence="1"/>
<dbReference type="EMBL" id="CP001287">
    <property type="protein sequence ID" value="ACK65256.1"/>
    <property type="molecule type" value="Genomic_DNA"/>
</dbReference>
<dbReference type="RefSeq" id="WP_012594530.1">
    <property type="nucleotide sequence ID" value="NC_011726.1"/>
</dbReference>
<dbReference type="SMR" id="B7K2C0"/>
<dbReference type="STRING" id="41431.PCC8801_1188"/>
<dbReference type="KEGG" id="cyp:PCC8801_1188"/>
<dbReference type="eggNOG" id="COG0554">
    <property type="taxonomic scope" value="Bacteria"/>
</dbReference>
<dbReference type="HOGENOM" id="CLU_009281_2_3_3"/>
<dbReference type="OrthoDB" id="9805576at2"/>
<dbReference type="UniPathway" id="UPA00618">
    <property type="reaction ID" value="UER00672"/>
</dbReference>
<dbReference type="Proteomes" id="UP000008204">
    <property type="component" value="Chromosome"/>
</dbReference>
<dbReference type="GO" id="GO:0005829">
    <property type="term" value="C:cytosol"/>
    <property type="evidence" value="ECO:0007669"/>
    <property type="project" value="TreeGrafter"/>
</dbReference>
<dbReference type="GO" id="GO:0005524">
    <property type="term" value="F:ATP binding"/>
    <property type="evidence" value="ECO:0007669"/>
    <property type="project" value="UniProtKB-UniRule"/>
</dbReference>
<dbReference type="GO" id="GO:0004370">
    <property type="term" value="F:glycerol kinase activity"/>
    <property type="evidence" value="ECO:0000250"/>
    <property type="project" value="UniProtKB"/>
</dbReference>
<dbReference type="GO" id="GO:0019563">
    <property type="term" value="P:glycerol catabolic process"/>
    <property type="evidence" value="ECO:0007669"/>
    <property type="project" value="UniProtKB-UniRule"/>
</dbReference>
<dbReference type="GO" id="GO:0006071">
    <property type="term" value="P:glycerol metabolic process"/>
    <property type="evidence" value="ECO:0000250"/>
    <property type="project" value="UniProtKB"/>
</dbReference>
<dbReference type="GO" id="GO:0006072">
    <property type="term" value="P:glycerol-3-phosphate metabolic process"/>
    <property type="evidence" value="ECO:0007669"/>
    <property type="project" value="InterPro"/>
</dbReference>
<dbReference type="CDD" id="cd07769">
    <property type="entry name" value="ASKHA_NBD_FGGY_GK"/>
    <property type="match status" value="1"/>
</dbReference>
<dbReference type="FunFam" id="3.30.420.40:FF:000007">
    <property type="entry name" value="Glycerol kinase"/>
    <property type="match status" value="1"/>
</dbReference>
<dbReference type="FunFam" id="3.30.420.40:FF:000008">
    <property type="entry name" value="Glycerol kinase"/>
    <property type="match status" value="1"/>
</dbReference>
<dbReference type="Gene3D" id="3.30.420.40">
    <property type="match status" value="2"/>
</dbReference>
<dbReference type="HAMAP" id="MF_00186">
    <property type="entry name" value="Glycerol_kin"/>
    <property type="match status" value="1"/>
</dbReference>
<dbReference type="InterPro" id="IPR043129">
    <property type="entry name" value="ATPase_NBD"/>
</dbReference>
<dbReference type="InterPro" id="IPR000577">
    <property type="entry name" value="Carb_kinase_FGGY"/>
</dbReference>
<dbReference type="InterPro" id="IPR018483">
    <property type="entry name" value="Carb_kinase_FGGY_CS"/>
</dbReference>
<dbReference type="InterPro" id="IPR018485">
    <property type="entry name" value="FGGY_C"/>
</dbReference>
<dbReference type="InterPro" id="IPR018484">
    <property type="entry name" value="FGGY_N"/>
</dbReference>
<dbReference type="InterPro" id="IPR005999">
    <property type="entry name" value="Glycerol_kin"/>
</dbReference>
<dbReference type="NCBIfam" id="TIGR01311">
    <property type="entry name" value="glycerol_kin"/>
    <property type="match status" value="1"/>
</dbReference>
<dbReference type="NCBIfam" id="NF000756">
    <property type="entry name" value="PRK00047.1"/>
    <property type="match status" value="1"/>
</dbReference>
<dbReference type="PANTHER" id="PTHR10196:SF69">
    <property type="entry name" value="GLYCEROL KINASE"/>
    <property type="match status" value="1"/>
</dbReference>
<dbReference type="PANTHER" id="PTHR10196">
    <property type="entry name" value="SUGAR KINASE"/>
    <property type="match status" value="1"/>
</dbReference>
<dbReference type="Pfam" id="PF02782">
    <property type="entry name" value="FGGY_C"/>
    <property type="match status" value="1"/>
</dbReference>
<dbReference type="Pfam" id="PF00370">
    <property type="entry name" value="FGGY_N"/>
    <property type="match status" value="1"/>
</dbReference>
<dbReference type="PIRSF" id="PIRSF000538">
    <property type="entry name" value="GlpK"/>
    <property type="match status" value="1"/>
</dbReference>
<dbReference type="SUPFAM" id="SSF53067">
    <property type="entry name" value="Actin-like ATPase domain"/>
    <property type="match status" value="2"/>
</dbReference>
<dbReference type="PROSITE" id="PS00445">
    <property type="entry name" value="FGGY_KINASES_2"/>
    <property type="match status" value="1"/>
</dbReference>
<evidence type="ECO:0000255" key="1">
    <source>
        <dbReference type="HAMAP-Rule" id="MF_00186"/>
    </source>
</evidence>
<protein>
    <recommendedName>
        <fullName evidence="1">Glycerol kinase</fullName>
        <ecNumber evidence="1">2.7.1.30</ecNumber>
    </recommendedName>
    <alternativeName>
        <fullName evidence="1">ATP:glycerol 3-phosphotransferase</fullName>
    </alternativeName>
    <alternativeName>
        <fullName evidence="1">Glycerokinase</fullName>
        <shortName evidence="1">GK</shortName>
    </alternativeName>
</protein>
<feature type="chain" id="PRO_1000118547" description="Glycerol kinase">
    <location>
        <begin position="1"/>
        <end position="500"/>
    </location>
</feature>
<feature type="binding site" evidence="1">
    <location>
        <position position="16"/>
    </location>
    <ligand>
        <name>ADP</name>
        <dbReference type="ChEBI" id="CHEBI:456216"/>
    </ligand>
</feature>
<feature type="binding site" evidence="1">
    <location>
        <position position="16"/>
    </location>
    <ligand>
        <name>ATP</name>
        <dbReference type="ChEBI" id="CHEBI:30616"/>
    </ligand>
</feature>
<feature type="binding site" evidence="1">
    <location>
        <position position="16"/>
    </location>
    <ligand>
        <name>sn-glycerol 3-phosphate</name>
        <dbReference type="ChEBI" id="CHEBI:57597"/>
    </ligand>
</feature>
<feature type="binding site" evidence="1">
    <location>
        <position position="17"/>
    </location>
    <ligand>
        <name>ATP</name>
        <dbReference type="ChEBI" id="CHEBI:30616"/>
    </ligand>
</feature>
<feature type="binding site" evidence="1">
    <location>
        <position position="20"/>
    </location>
    <ligand>
        <name>ADP</name>
        <dbReference type="ChEBI" id="CHEBI:456216"/>
    </ligand>
</feature>
<feature type="binding site" evidence="1">
    <location>
        <position position="86"/>
    </location>
    <ligand>
        <name>glycerol</name>
        <dbReference type="ChEBI" id="CHEBI:17754"/>
    </ligand>
</feature>
<feature type="binding site" evidence="1">
    <location>
        <position position="86"/>
    </location>
    <ligand>
        <name>sn-glycerol 3-phosphate</name>
        <dbReference type="ChEBI" id="CHEBI:57597"/>
    </ligand>
</feature>
<feature type="binding site" evidence="1">
    <location>
        <position position="87"/>
    </location>
    <ligand>
        <name>glycerol</name>
        <dbReference type="ChEBI" id="CHEBI:17754"/>
    </ligand>
</feature>
<feature type="binding site" evidence="1">
    <location>
        <position position="87"/>
    </location>
    <ligand>
        <name>sn-glycerol 3-phosphate</name>
        <dbReference type="ChEBI" id="CHEBI:57597"/>
    </ligand>
</feature>
<feature type="binding site" evidence="1">
    <location>
        <position position="138"/>
    </location>
    <ligand>
        <name>glycerol</name>
        <dbReference type="ChEBI" id="CHEBI:17754"/>
    </ligand>
</feature>
<feature type="binding site" evidence="1">
    <location>
        <position position="138"/>
    </location>
    <ligand>
        <name>sn-glycerol 3-phosphate</name>
        <dbReference type="ChEBI" id="CHEBI:57597"/>
    </ligand>
</feature>
<feature type="binding site" evidence="1">
    <location>
        <position position="247"/>
    </location>
    <ligand>
        <name>glycerol</name>
        <dbReference type="ChEBI" id="CHEBI:17754"/>
    </ligand>
</feature>
<feature type="binding site" evidence="1">
    <location>
        <position position="247"/>
    </location>
    <ligand>
        <name>sn-glycerol 3-phosphate</name>
        <dbReference type="ChEBI" id="CHEBI:57597"/>
    </ligand>
</feature>
<feature type="binding site" evidence="1">
    <location>
        <position position="248"/>
    </location>
    <ligand>
        <name>glycerol</name>
        <dbReference type="ChEBI" id="CHEBI:17754"/>
    </ligand>
</feature>
<feature type="binding site" evidence="1">
    <location>
        <position position="269"/>
    </location>
    <ligand>
        <name>ADP</name>
        <dbReference type="ChEBI" id="CHEBI:456216"/>
    </ligand>
</feature>
<feature type="binding site" evidence="1">
    <location>
        <position position="269"/>
    </location>
    <ligand>
        <name>ATP</name>
        <dbReference type="ChEBI" id="CHEBI:30616"/>
    </ligand>
</feature>
<feature type="binding site" evidence="1">
    <location>
        <position position="312"/>
    </location>
    <ligand>
        <name>ADP</name>
        <dbReference type="ChEBI" id="CHEBI:456216"/>
    </ligand>
</feature>
<feature type="binding site" evidence="1">
    <location>
        <position position="312"/>
    </location>
    <ligand>
        <name>ATP</name>
        <dbReference type="ChEBI" id="CHEBI:30616"/>
    </ligand>
</feature>
<feature type="binding site" evidence="1">
    <location>
        <position position="316"/>
    </location>
    <ligand>
        <name>ATP</name>
        <dbReference type="ChEBI" id="CHEBI:30616"/>
    </ligand>
</feature>
<feature type="binding site" evidence="1">
    <location>
        <position position="413"/>
    </location>
    <ligand>
        <name>ADP</name>
        <dbReference type="ChEBI" id="CHEBI:456216"/>
    </ligand>
</feature>
<feature type="binding site" evidence="1">
    <location>
        <position position="413"/>
    </location>
    <ligand>
        <name>ATP</name>
        <dbReference type="ChEBI" id="CHEBI:30616"/>
    </ligand>
</feature>
<feature type="binding site" evidence="1">
    <location>
        <position position="417"/>
    </location>
    <ligand>
        <name>ADP</name>
        <dbReference type="ChEBI" id="CHEBI:456216"/>
    </ligand>
</feature>